<feature type="chain" id="PRO_1000022342" description="Bifunctional uridylyltransferase/uridylyl-removing enzyme">
    <location>
        <begin position="1"/>
        <end position="892"/>
    </location>
</feature>
<feature type="domain" description="HD" evidence="2">
    <location>
        <begin position="470"/>
        <end position="592"/>
    </location>
</feature>
<feature type="domain" description="ACT 1" evidence="1">
    <location>
        <begin position="711"/>
        <end position="790"/>
    </location>
</feature>
<feature type="domain" description="ACT 2" evidence="1">
    <location>
        <begin position="818"/>
        <end position="892"/>
    </location>
</feature>
<feature type="region of interest" description="Uridylyltransferase">
    <location>
        <begin position="1"/>
        <end position="351"/>
    </location>
</feature>
<feature type="region of interest" description="Disordered" evidence="3">
    <location>
        <begin position="1"/>
        <end position="20"/>
    </location>
</feature>
<feature type="region of interest" description="Uridylyl-removing">
    <location>
        <begin position="352"/>
        <end position="710"/>
    </location>
</feature>
<feature type="compositionally biased region" description="Polar residues" evidence="3">
    <location>
        <begin position="1"/>
        <end position="15"/>
    </location>
</feature>
<sequence>MMSNTLPEQSVNTTLAPLPGQPDYPATWPADALNCAQIKQHLDAFQQWLGAAFDDGYTAEQLIEARTEFIDQLLQRLWIAAGFGDTPDTALVAVGGYGRGELHPLSDIDLLILSRKRLSEAQAQKVGELLTLLWDVKLEVGHSVRTLEECLLEGLSDLTVATNLIESRLLIGDVALFLELQKHIFSDGFWPSEKFFAAKVEEQNERHQRYHGTSYNLEPDIKSSPGGLRDIHTLQWVARRHFGATSLREMVGFGFLTEAERNELDECQHLLWRIRFALHLELNRYDNRLLFDRQLSVAQRLRYEGEGNEPVEHMMKDFYRVTRRVGELNQMLLQLFDEAILALTTDEKPRVLDDDFQLRGTLIDLRDETLFIREPQAILRMFYMMVRNRDITGIYSTTLRHLRHARRHLKQPLCYIPEARSLFLAMLRHPGAVSRGLLPMHRHSVLWAYMPQWSHIVGQMQFDLFHAYTVDEHTIRVLLKLESFAKEETRAKHPLCVDLWPRLSHPELILIAALFHDIAKGRGGDHSVLGAQDILKFAELHGLNSRETQLVAWLVRHHLLMSVTAQRRDIQDPEVIKQFAEEVQTENRLRFLVCLTVADICATNETLWNSWKQSLLRELYFATEKQLRRGMQSTPDMRERVRHHQLQALALLRMENIDEEALHHIWGRCRANYFVRHSPNQLAWHARHLLRHDLSKPLILLSPQATRGGTEIFIWSPDRPYLFAAVCAELDRRNLSVHDAQIFTTRDDMAMDTFIVLEPDGSPLSPDRHEAIRHGLEQAITQRTWQPPQPRRQPAKLRHFTVETEVNFLPTHTDRKSFLELIALDQPGLLARVGQVFADLGISLHGARISTIGERVEDLFIIATADRRGLNNLLQQEVRQRLTEDLNPNDKV</sequence>
<evidence type="ECO:0000255" key="1">
    <source>
        <dbReference type="HAMAP-Rule" id="MF_00277"/>
    </source>
</evidence>
<evidence type="ECO:0000255" key="2">
    <source>
        <dbReference type="PROSITE-ProRule" id="PRU01175"/>
    </source>
</evidence>
<evidence type="ECO:0000256" key="3">
    <source>
        <dbReference type="SAM" id="MobiDB-lite"/>
    </source>
</evidence>
<comment type="function">
    <text evidence="1">Modifies, by uridylylation and deuridylylation, the PII regulatory proteins (GlnB and homologs), in response to the nitrogen status of the cell that GlnD senses through the glutamine level. Under low glutamine levels, catalyzes the conversion of the PII proteins and UTP to PII-UMP and PPi, while under higher glutamine levels, GlnD hydrolyzes PII-UMP to PII and UMP (deuridylylation). Thus, controls uridylylation state and activity of the PII proteins, and plays an important role in the regulation of nitrogen assimilation and metabolism.</text>
</comment>
<comment type="catalytic activity">
    <reaction evidence="1">
        <text>[protein-PII]-L-tyrosine + UTP = [protein-PII]-uridylyl-L-tyrosine + diphosphate</text>
        <dbReference type="Rhea" id="RHEA:13673"/>
        <dbReference type="Rhea" id="RHEA-COMP:12147"/>
        <dbReference type="Rhea" id="RHEA-COMP:12148"/>
        <dbReference type="ChEBI" id="CHEBI:33019"/>
        <dbReference type="ChEBI" id="CHEBI:46398"/>
        <dbReference type="ChEBI" id="CHEBI:46858"/>
        <dbReference type="ChEBI" id="CHEBI:90602"/>
        <dbReference type="EC" id="2.7.7.59"/>
    </reaction>
</comment>
<comment type="catalytic activity">
    <reaction evidence="1">
        <text>[protein-PII]-uridylyl-L-tyrosine + H2O = [protein-PII]-L-tyrosine + UMP + H(+)</text>
        <dbReference type="Rhea" id="RHEA:48600"/>
        <dbReference type="Rhea" id="RHEA-COMP:12147"/>
        <dbReference type="Rhea" id="RHEA-COMP:12148"/>
        <dbReference type="ChEBI" id="CHEBI:15377"/>
        <dbReference type="ChEBI" id="CHEBI:15378"/>
        <dbReference type="ChEBI" id="CHEBI:46858"/>
        <dbReference type="ChEBI" id="CHEBI:57865"/>
        <dbReference type="ChEBI" id="CHEBI:90602"/>
    </reaction>
</comment>
<comment type="cofactor">
    <cofactor evidence="1">
        <name>Mg(2+)</name>
        <dbReference type="ChEBI" id="CHEBI:18420"/>
    </cofactor>
</comment>
<comment type="activity regulation">
    <text evidence="1">Uridylyltransferase (UTase) activity is inhibited by glutamine, while glutamine activates uridylyl-removing (UR) activity.</text>
</comment>
<comment type="domain">
    <text evidence="1">Has four distinct domains: an N-terminal nucleotidyltransferase (NT) domain responsible for UTase activity, a central HD domain that encodes UR activity, and two C-terminal ACT domains that seem to have a role in glutamine sensing.</text>
</comment>
<comment type="similarity">
    <text evidence="1">Belongs to the GlnD family.</text>
</comment>
<gene>
    <name evidence="1" type="primary">glnD</name>
    <name type="ordered locus">ESA_03176</name>
</gene>
<keyword id="KW-0378">Hydrolase</keyword>
<keyword id="KW-0460">Magnesium</keyword>
<keyword id="KW-0511">Multifunctional enzyme</keyword>
<keyword id="KW-0548">Nucleotidyltransferase</keyword>
<keyword id="KW-1185">Reference proteome</keyword>
<keyword id="KW-0677">Repeat</keyword>
<keyword id="KW-0808">Transferase</keyword>
<accession>A7MGS0</accession>
<dbReference type="EC" id="2.7.7.59" evidence="1"/>
<dbReference type="EC" id="3.1.4.-" evidence="1"/>
<dbReference type="EMBL" id="CP000783">
    <property type="protein sequence ID" value="ABU78398.1"/>
    <property type="molecule type" value="Genomic_DNA"/>
</dbReference>
<dbReference type="SMR" id="A7MGS0"/>
<dbReference type="KEGG" id="esa:ESA_03176"/>
<dbReference type="HOGENOM" id="CLU_012833_0_0_6"/>
<dbReference type="Proteomes" id="UP000000260">
    <property type="component" value="Chromosome"/>
</dbReference>
<dbReference type="GO" id="GO:0008773">
    <property type="term" value="F:[protein-PII] uridylyltransferase activity"/>
    <property type="evidence" value="ECO:0007669"/>
    <property type="project" value="UniProtKB-UniRule"/>
</dbReference>
<dbReference type="GO" id="GO:0008081">
    <property type="term" value="F:phosphoric diester hydrolase activity"/>
    <property type="evidence" value="ECO:0007669"/>
    <property type="project" value="UniProtKB-UniRule"/>
</dbReference>
<dbReference type="GO" id="GO:0006808">
    <property type="term" value="P:regulation of nitrogen utilization"/>
    <property type="evidence" value="ECO:0007669"/>
    <property type="project" value="UniProtKB-UniRule"/>
</dbReference>
<dbReference type="CDD" id="cd04899">
    <property type="entry name" value="ACT_ACR-UUR-like_2"/>
    <property type="match status" value="1"/>
</dbReference>
<dbReference type="CDD" id="cd04900">
    <property type="entry name" value="ACT_UUR-like_1"/>
    <property type="match status" value="1"/>
</dbReference>
<dbReference type="CDD" id="cd00077">
    <property type="entry name" value="HDc"/>
    <property type="match status" value="1"/>
</dbReference>
<dbReference type="CDD" id="cd05401">
    <property type="entry name" value="NT_GlnE_GlnD_like"/>
    <property type="match status" value="1"/>
</dbReference>
<dbReference type="FunFam" id="1.10.3210.10:FF:000005">
    <property type="entry name" value="Bifunctional uridylyltransferase/uridylyl-removing enzyme"/>
    <property type="match status" value="1"/>
</dbReference>
<dbReference type="Gene3D" id="1.10.3210.10">
    <property type="entry name" value="Hypothetical protein af1432"/>
    <property type="match status" value="1"/>
</dbReference>
<dbReference type="HAMAP" id="MF_00277">
    <property type="entry name" value="PII_uridylyl_transf"/>
    <property type="match status" value="1"/>
</dbReference>
<dbReference type="InterPro" id="IPR045865">
    <property type="entry name" value="ACT-like_dom_sf"/>
</dbReference>
<dbReference type="InterPro" id="IPR002912">
    <property type="entry name" value="ACT_dom"/>
</dbReference>
<dbReference type="InterPro" id="IPR003607">
    <property type="entry name" value="HD/PDEase_dom"/>
</dbReference>
<dbReference type="InterPro" id="IPR006674">
    <property type="entry name" value="HD_domain"/>
</dbReference>
<dbReference type="InterPro" id="IPR043519">
    <property type="entry name" value="NT_sf"/>
</dbReference>
<dbReference type="InterPro" id="IPR013546">
    <property type="entry name" value="PII_UdlTrfase/GS_AdlTrfase"/>
</dbReference>
<dbReference type="InterPro" id="IPR002934">
    <property type="entry name" value="Polymerase_NTP_transf_dom"/>
</dbReference>
<dbReference type="InterPro" id="IPR010043">
    <property type="entry name" value="UTase/UR"/>
</dbReference>
<dbReference type="NCBIfam" id="NF002487">
    <property type="entry name" value="PRK01759.1"/>
    <property type="match status" value="1"/>
</dbReference>
<dbReference type="NCBIfam" id="NF003448">
    <property type="entry name" value="PRK05007.1"/>
    <property type="match status" value="1"/>
</dbReference>
<dbReference type="NCBIfam" id="TIGR01693">
    <property type="entry name" value="UTase_glnD"/>
    <property type="match status" value="1"/>
</dbReference>
<dbReference type="PANTHER" id="PTHR47320">
    <property type="entry name" value="BIFUNCTIONAL URIDYLYLTRANSFERASE/URIDYLYL-REMOVING ENZYME"/>
    <property type="match status" value="1"/>
</dbReference>
<dbReference type="PANTHER" id="PTHR47320:SF1">
    <property type="entry name" value="BIFUNCTIONAL URIDYLYLTRANSFERASE_URIDYLYL-REMOVING ENZYME"/>
    <property type="match status" value="1"/>
</dbReference>
<dbReference type="Pfam" id="PF01842">
    <property type="entry name" value="ACT"/>
    <property type="match status" value="2"/>
</dbReference>
<dbReference type="Pfam" id="PF08335">
    <property type="entry name" value="GlnD_UR_UTase"/>
    <property type="match status" value="1"/>
</dbReference>
<dbReference type="Pfam" id="PF01966">
    <property type="entry name" value="HD"/>
    <property type="match status" value="1"/>
</dbReference>
<dbReference type="Pfam" id="PF01909">
    <property type="entry name" value="NTP_transf_2"/>
    <property type="match status" value="1"/>
</dbReference>
<dbReference type="PIRSF" id="PIRSF006288">
    <property type="entry name" value="PII_uridyltransf"/>
    <property type="match status" value="1"/>
</dbReference>
<dbReference type="SMART" id="SM00471">
    <property type="entry name" value="HDc"/>
    <property type="match status" value="1"/>
</dbReference>
<dbReference type="SUPFAM" id="SSF55021">
    <property type="entry name" value="ACT-like"/>
    <property type="match status" value="2"/>
</dbReference>
<dbReference type="SUPFAM" id="SSF109604">
    <property type="entry name" value="HD-domain/PDEase-like"/>
    <property type="match status" value="1"/>
</dbReference>
<dbReference type="SUPFAM" id="SSF81301">
    <property type="entry name" value="Nucleotidyltransferase"/>
    <property type="match status" value="1"/>
</dbReference>
<dbReference type="SUPFAM" id="SSF81593">
    <property type="entry name" value="Nucleotidyltransferase substrate binding subunit/domain"/>
    <property type="match status" value="1"/>
</dbReference>
<dbReference type="SUPFAM" id="SSF81891">
    <property type="entry name" value="Poly A polymerase C-terminal region-like"/>
    <property type="match status" value="1"/>
</dbReference>
<dbReference type="PROSITE" id="PS51671">
    <property type="entry name" value="ACT"/>
    <property type="match status" value="2"/>
</dbReference>
<dbReference type="PROSITE" id="PS51831">
    <property type="entry name" value="HD"/>
    <property type="match status" value="1"/>
</dbReference>
<proteinExistence type="inferred from homology"/>
<reference key="1">
    <citation type="journal article" date="2010" name="PLoS ONE">
        <title>Genome sequence of Cronobacter sakazakii BAA-894 and comparative genomic hybridization analysis with other Cronobacter species.</title>
        <authorList>
            <person name="Kucerova E."/>
            <person name="Clifton S.W."/>
            <person name="Xia X.Q."/>
            <person name="Long F."/>
            <person name="Porwollik S."/>
            <person name="Fulton L."/>
            <person name="Fronick C."/>
            <person name="Minx P."/>
            <person name="Kyung K."/>
            <person name="Warren W."/>
            <person name="Fulton R."/>
            <person name="Feng D."/>
            <person name="Wollam A."/>
            <person name="Shah N."/>
            <person name="Bhonagiri V."/>
            <person name="Nash W.E."/>
            <person name="Hallsworth-Pepin K."/>
            <person name="Wilson R.K."/>
            <person name="McClelland M."/>
            <person name="Forsythe S.J."/>
        </authorList>
    </citation>
    <scope>NUCLEOTIDE SEQUENCE [LARGE SCALE GENOMIC DNA]</scope>
    <source>
        <strain>ATCC BAA-894</strain>
    </source>
</reference>
<organism>
    <name type="scientific">Cronobacter sakazakii (strain ATCC BAA-894)</name>
    <name type="common">Enterobacter sakazakii</name>
    <dbReference type="NCBI Taxonomy" id="290339"/>
    <lineage>
        <taxon>Bacteria</taxon>
        <taxon>Pseudomonadati</taxon>
        <taxon>Pseudomonadota</taxon>
        <taxon>Gammaproteobacteria</taxon>
        <taxon>Enterobacterales</taxon>
        <taxon>Enterobacteriaceae</taxon>
        <taxon>Cronobacter</taxon>
    </lineage>
</organism>
<protein>
    <recommendedName>
        <fullName evidence="1">Bifunctional uridylyltransferase/uridylyl-removing enzyme</fullName>
        <shortName evidence="1">UTase/UR</shortName>
    </recommendedName>
    <alternativeName>
        <fullName evidence="1">Bifunctional [protein-PII] modification enzyme</fullName>
    </alternativeName>
    <alternativeName>
        <fullName evidence="1">Bifunctional nitrogen sensor protein</fullName>
    </alternativeName>
    <domain>
        <recommendedName>
            <fullName evidence="1">[Protein-PII] uridylyltransferase</fullName>
            <shortName evidence="1">PII uridylyltransferase</shortName>
            <shortName evidence="1">UTase</shortName>
            <ecNumber evidence="1">2.7.7.59</ecNumber>
        </recommendedName>
    </domain>
    <domain>
        <recommendedName>
            <fullName evidence="1">[Protein-PII]-UMP uridylyl-removing enzyme</fullName>
            <shortName evidence="1">UR</shortName>
            <ecNumber evidence="1">3.1.4.-</ecNumber>
        </recommendedName>
    </domain>
</protein>
<name>GLND_CROS8</name>